<protein>
    <recommendedName>
        <fullName>Galactose mutarotase</fullName>
        <ecNumber evidence="2">5.1.3.3</ecNumber>
    </recommendedName>
    <alternativeName>
        <fullName>Aldose 1-epimerase</fullName>
    </alternativeName>
</protein>
<keyword id="KW-0119">Carbohydrate metabolism</keyword>
<keyword id="KW-0963">Cytoplasm</keyword>
<keyword id="KW-0413">Isomerase</keyword>
<keyword id="KW-0597">Phosphoprotein</keyword>
<keyword id="KW-1185">Reference proteome</keyword>
<name>GALM_PIG</name>
<gene>
    <name type="primary">GALM</name>
</gene>
<accession>Q9GKX6</accession>
<dbReference type="EC" id="5.1.3.3" evidence="2"/>
<dbReference type="EMBL" id="AB044390">
    <property type="protein sequence ID" value="BAB18973.1"/>
    <property type="molecule type" value="mRNA"/>
</dbReference>
<dbReference type="RefSeq" id="NP_999571.1">
    <property type="nucleotide sequence ID" value="NM_214406.1"/>
</dbReference>
<dbReference type="SMR" id="Q9GKX6"/>
<dbReference type="FunCoup" id="Q9GKX6">
    <property type="interactions" value="250"/>
</dbReference>
<dbReference type="STRING" id="9823.ENSSSCP00000067576"/>
<dbReference type="PaxDb" id="9823-ENSSSCP00000009052"/>
<dbReference type="PeptideAtlas" id="Q9GKX6"/>
<dbReference type="Ensembl" id="ENSSSCT00070009543.1">
    <property type="protein sequence ID" value="ENSSSCP00070007827.1"/>
    <property type="gene ID" value="ENSSSCG00070005030.1"/>
</dbReference>
<dbReference type="Ensembl" id="ENSSSCT00085033416">
    <property type="protein sequence ID" value="ENSSSCP00085022982"/>
    <property type="gene ID" value="ENSSSCG00085017595"/>
</dbReference>
<dbReference type="Ensembl" id="ENSSSCT00090050886">
    <property type="protein sequence ID" value="ENSSSCP00090031734"/>
    <property type="gene ID" value="ENSSSCG00090028719"/>
</dbReference>
<dbReference type="Ensembl" id="ENSSSCT00105002827">
    <property type="protein sequence ID" value="ENSSSCP00105002099"/>
    <property type="gene ID" value="ENSSSCG00105001456"/>
</dbReference>
<dbReference type="Ensembl" id="ENSSSCT00110014325">
    <property type="protein sequence ID" value="ENSSSCP00110009945"/>
    <property type="gene ID" value="ENSSSCG00110007372"/>
</dbReference>
<dbReference type="Ensembl" id="ENSSSCT00115012429">
    <property type="protein sequence ID" value="ENSSSCP00115011739"/>
    <property type="gene ID" value="ENSSSCG00115007130"/>
</dbReference>
<dbReference type="Ensembl" id="ENSSSCT00130016295">
    <property type="protein sequence ID" value="ENSSSCP00130010986"/>
    <property type="gene ID" value="ENSSSCG00130008828"/>
</dbReference>
<dbReference type="GeneID" id="399536"/>
<dbReference type="KEGG" id="ssc:399536"/>
<dbReference type="CTD" id="130589"/>
<dbReference type="eggNOG" id="KOG1604">
    <property type="taxonomic scope" value="Eukaryota"/>
</dbReference>
<dbReference type="HOGENOM" id="CLU_031753_2_0_1"/>
<dbReference type="InParanoid" id="Q9GKX6"/>
<dbReference type="OMA" id="IYHHISR"/>
<dbReference type="OrthoDB" id="274691at2759"/>
<dbReference type="TreeFam" id="TF324207"/>
<dbReference type="UniPathway" id="UPA00214"/>
<dbReference type="UniPathway" id="UPA00242"/>
<dbReference type="Proteomes" id="UP000008227">
    <property type="component" value="Unplaced"/>
</dbReference>
<dbReference type="Proteomes" id="UP000314985">
    <property type="component" value="Chromosome 3"/>
</dbReference>
<dbReference type="Proteomes" id="UP000694570">
    <property type="component" value="Unplaced"/>
</dbReference>
<dbReference type="Proteomes" id="UP000694571">
    <property type="component" value="Unplaced"/>
</dbReference>
<dbReference type="Proteomes" id="UP000694720">
    <property type="component" value="Unplaced"/>
</dbReference>
<dbReference type="Proteomes" id="UP000694722">
    <property type="component" value="Unplaced"/>
</dbReference>
<dbReference type="Proteomes" id="UP000694723">
    <property type="component" value="Unplaced"/>
</dbReference>
<dbReference type="Proteomes" id="UP000694724">
    <property type="component" value="Unplaced"/>
</dbReference>
<dbReference type="Proteomes" id="UP000694725">
    <property type="component" value="Unplaced"/>
</dbReference>
<dbReference type="Proteomes" id="UP000694726">
    <property type="component" value="Unplaced"/>
</dbReference>
<dbReference type="Proteomes" id="UP000694727">
    <property type="component" value="Unplaced"/>
</dbReference>
<dbReference type="Proteomes" id="UP000694728">
    <property type="component" value="Unplaced"/>
</dbReference>
<dbReference type="GO" id="GO:0005737">
    <property type="term" value="C:cytoplasm"/>
    <property type="evidence" value="ECO:0007669"/>
    <property type="project" value="UniProtKB-SubCell"/>
</dbReference>
<dbReference type="GO" id="GO:0004034">
    <property type="term" value="F:aldose 1-epimerase activity"/>
    <property type="evidence" value="ECO:0000318"/>
    <property type="project" value="GO_Central"/>
</dbReference>
<dbReference type="GO" id="GO:0030246">
    <property type="term" value="F:carbohydrate binding"/>
    <property type="evidence" value="ECO:0007669"/>
    <property type="project" value="InterPro"/>
</dbReference>
<dbReference type="GO" id="GO:0033499">
    <property type="term" value="P:galactose catabolic process via UDP-galactose, Leloir pathway"/>
    <property type="evidence" value="ECO:0000318"/>
    <property type="project" value="GO_Central"/>
</dbReference>
<dbReference type="GO" id="GO:0006006">
    <property type="term" value="P:glucose metabolic process"/>
    <property type="evidence" value="ECO:0000318"/>
    <property type="project" value="GO_Central"/>
</dbReference>
<dbReference type="CDD" id="cd09019">
    <property type="entry name" value="galactose_mutarotase_like"/>
    <property type="match status" value="1"/>
</dbReference>
<dbReference type="FunFam" id="2.70.98.10:FF:000003">
    <property type="entry name" value="Aldose 1-epimerase"/>
    <property type="match status" value="1"/>
</dbReference>
<dbReference type="Gene3D" id="2.70.98.10">
    <property type="match status" value="1"/>
</dbReference>
<dbReference type="InterPro" id="IPR018052">
    <property type="entry name" value="Ald1_epimerase_CS"/>
</dbReference>
<dbReference type="InterPro" id="IPR015443">
    <property type="entry name" value="Aldose_1-epimerase"/>
</dbReference>
<dbReference type="InterPro" id="IPR008183">
    <property type="entry name" value="Aldose_1/G6P_1-epimerase"/>
</dbReference>
<dbReference type="InterPro" id="IPR011013">
    <property type="entry name" value="Gal_mutarotase_sf_dom"/>
</dbReference>
<dbReference type="InterPro" id="IPR047215">
    <property type="entry name" value="Galactose_mutarotase-like"/>
</dbReference>
<dbReference type="InterPro" id="IPR014718">
    <property type="entry name" value="GH-type_carb-bd"/>
</dbReference>
<dbReference type="NCBIfam" id="NF008277">
    <property type="entry name" value="PRK11055.1"/>
    <property type="match status" value="1"/>
</dbReference>
<dbReference type="PANTHER" id="PTHR10091">
    <property type="entry name" value="ALDOSE-1-EPIMERASE"/>
    <property type="match status" value="1"/>
</dbReference>
<dbReference type="PANTHER" id="PTHR10091:SF0">
    <property type="entry name" value="GALACTOSE MUTAROTASE"/>
    <property type="match status" value="1"/>
</dbReference>
<dbReference type="Pfam" id="PF01263">
    <property type="entry name" value="Aldose_epim"/>
    <property type="match status" value="1"/>
</dbReference>
<dbReference type="PIRSF" id="PIRSF005096">
    <property type="entry name" value="GALM"/>
    <property type="match status" value="1"/>
</dbReference>
<dbReference type="SUPFAM" id="SSF74650">
    <property type="entry name" value="Galactose mutarotase-like"/>
    <property type="match status" value="1"/>
</dbReference>
<dbReference type="PROSITE" id="PS00545">
    <property type="entry name" value="ALDOSE_1_EPIMERASE"/>
    <property type="match status" value="1"/>
</dbReference>
<reference key="1">
    <citation type="submission" date="2000-06" db="EMBL/GenBank/DDBJ databases">
        <title>Molecular cloning of an aldose 1-epimerase (mutarotase) cDNA from hog kidney and its overexpression in Escherichia coli and some properties of recombinant enzyme.</title>
        <authorList>
            <person name="Kitazawa S."/>
            <person name="Mori H."/>
            <person name="Kato N."/>
            <person name="Ono C."/>
            <person name="Ito H."/>
            <person name="Kimura A."/>
            <person name="Matsui H."/>
            <person name="Chiba S."/>
        </authorList>
    </citation>
    <scope>NUCLEOTIDE SEQUENCE [MRNA]</scope>
    <source>
        <tissue>Kidney</tissue>
    </source>
</reference>
<sequence length="342" mass="37816">MVSVTRSVFGDLPSGAGTVEKFQLQSDQLRVDIISWGCTITALEVKDRQGRASDVVLGFAELKEYLQKHPYFGAVVGRVANRIAKGTFTLDGKEYKLAINNGPNSLHGGVRGFDKVLWTPRVLSNGIEFSRVSPDGEEGYPGELKVWVTYTLDGGELVVNYRAQASQTTPVNLTNHSYFNLAGQGSPNIYDHEVTIEADAFLPVDETLIPTGEIAPVQGTAFDLRKPVELGKHLQEFHINGFDHNFCLKRSKEKQFCARVHHAGSGRVLEVYTTQPGIQFYTGNFLDGTLKGKTGAVYPKHSGFCLETQNWPNAVNQPHFPPVLLKPGEEYNHTTWFVFSVA</sequence>
<evidence type="ECO:0000250" key="1">
    <source>
        <dbReference type="UniProtKB" id="Q66HG4"/>
    </source>
</evidence>
<evidence type="ECO:0000250" key="2">
    <source>
        <dbReference type="UniProtKB" id="Q96C23"/>
    </source>
</evidence>
<evidence type="ECO:0000305" key="3"/>
<proteinExistence type="evidence at transcript level"/>
<organism>
    <name type="scientific">Sus scrofa</name>
    <name type="common">Pig</name>
    <dbReference type="NCBI Taxonomy" id="9823"/>
    <lineage>
        <taxon>Eukaryota</taxon>
        <taxon>Metazoa</taxon>
        <taxon>Chordata</taxon>
        <taxon>Craniata</taxon>
        <taxon>Vertebrata</taxon>
        <taxon>Euteleostomi</taxon>
        <taxon>Mammalia</taxon>
        <taxon>Eutheria</taxon>
        <taxon>Laurasiatheria</taxon>
        <taxon>Artiodactyla</taxon>
        <taxon>Suina</taxon>
        <taxon>Suidae</taxon>
        <taxon>Sus</taxon>
    </lineage>
</organism>
<feature type="initiator methionine" description="Removed" evidence="2">
    <location>
        <position position="1"/>
    </location>
</feature>
<feature type="chain" id="PRO_0000197435" description="Galactose mutarotase">
    <location>
        <begin position="2"/>
        <end position="342"/>
    </location>
</feature>
<feature type="active site" description="Proton donor" evidence="2">
    <location>
        <position position="176"/>
    </location>
</feature>
<feature type="active site" description="Proton acceptor" evidence="2">
    <location>
        <position position="307"/>
    </location>
</feature>
<feature type="binding site" evidence="2">
    <location>
        <begin position="81"/>
        <end position="82"/>
    </location>
    <ligand>
        <name>beta-D-galactose</name>
        <dbReference type="ChEBI" id="CHEBI:27667"/>
    </ligand>
</feature>
<feature type="binding site" evidence="2">
    <location>
        <position position="107"/>
    </location>
    <ligand>
        <name>beta-D-galactose</name>
        <dbReference type="ChEBI" id="CHEBI:27667"/>
    </ligand>
</feature>
<feature type="binding site" evidence="2">
    <location>
        <begin position="176"/>
        <end position="178"/>
    </location>
    <ligand>
        <name>beta-D-galactose</name>
        <dbReference type="ChEBI" id="CHEBI:27667"/>
    </ligand>
</feature>
<feature type="binding site" evidence="2">
    <location>
        <position position="243"/>
    </location>
    <ligand>
        <name>beta-D-galactose</name>
        <dbReference type="ChEBI" id="CHEBI:27667"/>
    </ligand>
</feature>
<feature type="binding site" evidence="2">
    <location>
        <position position="279"/>
    </location>
    <ligand>
        <name>beta-D-galactose</name>
        <dbReference type="ChEBI" id="CHEBI:27667"/>
    </ligand>
</feature>
<feature type="binding site" evidence="2">
    <location>
        <position position="307"/>
    </location>
    <ligand>
        <name>beta-D-galactose</name>
        <dbReference type="ChEBI" id="CHEBI:27667"/>
    </ligand>
</feature>
<feature type="modified residue" description="Phosphoserine" evidence="2">
    <location>
        <position position="14"/>
    </location>
</feature>
<feature type="modified residue" description="Phosphoserine" evidence="1">
    <location>
        <position position="124"/>
    </location>
</feature>
<comment type="function">
    <text evidence="2">Mutarotase that catalyzes the interconversion of beta-D-galactose and alpha-D-galactose during galactose metabolism. Beta-D-galactose is metabolized in the liver into glucose 1-phosphate, the primary metabolic fuel, by the action of four enzymes that constitute the Leloir pathway: GALM, GALK1 (galactokinase), GALT (galactose-1-phosphate uridylyltransferase) and GALE (UDP-galactose-4'-epimerase). Involved in the maintenance of the equilibrium between the beta- and alpha-anomers of galactose, therefore ensuring a sufficient supply of the alpha-anomer for GALK1. Also active on D-glucose although shows a preference for galactose over glucose.</text>
</comment>
<comment type="catalytic activity">
    <reaction evidence="2">
        <text>alpha-D-galactose = beta-D-galactose</text>
        <dbReference type="Rhea" id="RHEA:28675"/>
        <dbReference type="ChEBI" id="CHEBI:27667"/>
        <dbReference type="ChEBI" id="CHEBI:28061"/>
        <dbReference type="EC" id="5.1.3.3"/>
    </reaction>
    <physiologicalReaction direction="right-to-left" evidence="2">
        <dbReference type="Rhea" id="RHEA:28677"/>
    </physiologicalReaction>
</comment>
<comment type="catalytic activity">
    <reaction evidence="2">
        <text>alpha-D-glucose = beta-D-glucose</text>
        <dbReference type="Rhea" id="RHEA:10264"/>
        <dbReference type="ChEBI" id="CHEBI:15903"/>
        <dbReference type="ChEBI" id="CHEBI:17925"/>
        <dbReference type="EC" id="5.1.3.3"/>
    </reaction>
</comment>
<comment type="pathway">
    <text evidence="2">Carbohydrate metabolism; hexose metabolism.</text>
</comment>
<comment type="pathway">
    <text evidence="2">Carbohydrate metabolism; galactose metabolism.</text>
</comment>
<comment type="subunit">
    <text evidence="2">Monomer.</text>
</comment>
<comment type="subcellular location">
    <subcellularLocation>
        <location evidence="3">Cytoplasm</location>
    </subcellularLocation>
</comment>
<comment type="similarity">
    <text evidence="3">Belongs to the aldose epimerase family.</text>
</comment>